<proteinExistence type="evidence at protein level"/>
<keyword id="KW-0002">3D-structure</keyword>
<keyword id="KW-0961">Cell wall biogenesis/degradation</keyword>
<keyword id="KW-0479">Metal-binding</keyword>
<keyword id="KW-0521">NADP</keyword>
<keyword id="KW-0560">Oxidoreductase</keyword>
<keyword id="KW-1185">Reference proteome</keyword>
<keyword id="KW-0777">Teichoic acid biosynthesis</keyword>
<keyword id="KW-0862">Zinc</keyword>
<sequence>MINQVYQLVAPRQFEVTYNNVDIYSDYVIVRPLYMSICAADQRYYTGSRDENVLSQKLPMSLIHEGVGEVVFDSKGVFNKGTKVVMVPNTPTEKDDVIAENYLKSSYFRSSGHDGFMQDFVLLNHDRAVPLPDDIDLSIISYTELVTVSLHAIRRFEKKSISNKNTFGIWGDGNLGYITAILLRKLYPESKIYVFGKTDYKLSHFSFVDDVFFINKIPEGLTFDHAFECVGGRGSQSAINQMIDYISPEGSIALLGVSEFPVEVNTRLVLEKGLTLIGSSRSGSKDFQDVVDLYIQYPDIVDKLALLKGQEFEIATINDLTEAFEADLSTSWGKTVLKWIM</sequence>
<organism>
    <name type="scientific">Staphylococcus aureus (strain NCTC 8325 / PS 47)</name>
    <dbReference type="NCBI Taxonomy" id="93061"/>
    <lineage>
        <taxon>Bacteria</taxon>
        <taxon>Bacillati</taxon>
        <taxon>Bacillota</taxon>
        <taxon>Bacilli</taxon>
        <taxon>Bacillales</taxon>
        <taxon>Staphylococcaceae</taxon>
        <taxon>Staphylococcus</taxon>
    </lineage>
</organism>
<evidence type="ECO:0000255" key="1">
    <source>
        <dbReference type="HAMAP-Rule" id="MF_02069"/>
    </source>
</evidence>
<evidence type="ECO:0000269" key="2">
    <source>
    </source>
</evidence>
<evidence type="ECO:0000303" key="3">
    <source>
    </source>
</evidence>
<evidence type="ECO:0000305" key="4"/>
<evidence type="ECO:0000305" key="5">
    <source>
    </source>
</evidence>
<evidence type="ECO:0000312" key="6">
    <source>
        <dbReference type="EMBL" id="ABD29401.1"/>
    </source>
</evidence>
<evidence type="ECO:0007829" key="7">
    <source>
        <dbReference type="PDB" id="6XHK"/>
    </source>
</evidence>
<dbReference type="EC" id="1.1.1.405" evidence="1 2"/>
<dbReference type="EMBL" id="CP000253">
    <property type="protein sequence ID" value="ABD29401.1"/>
    <property type="molecule type" value="Genomic_DNA"/>
</dbReference>
<dbReference type="RefSeq" id="WP_000610203.1">
    <property type="nucleotide sequence ID" value="NZ_LS483365.1"/>
</dbReference>
<dbReference type="RefSeq" id="YP_498821.1">
    <property type="nucleotide sequence ID" value="NC_007795.1"/>
</dbReference>
<dbReference type="PDB" id="6XH9">
    <property type="method" value="X-ray"/>
    <property type="resolution" value="3.20 A"/>
    <property type="chains" value="A=1-341"/>
</dbReference>
<dbReference type="PDB" id="6XHK">
    <property type="method" value="X-ray"/>
    <property type="resolution" value="3.00 A"/>
    <property type="chains" value="A=1-341"/>
</dbReference>
<dbReference type="PDBsum" id="6XH9"/>
<dbReference type="PDBsum" id="6XHK"/>
<dbReference type="SMR" id="Q2G1B9"/>
<dbReference type="STRING" id="93061.SAOUHSC_00226"/>
<dbReference type="PaxDb" id="1280-SAXN108_0236"/>
<dbReference type="GeneID" id="3920301"/>
<dbReference type="KEGG" id="sao:SAOUHSC_00226"/>
<dbReference type="PATRIC" id="fig|93061.5.peg.207"/>
<dbReference type="eggNOG" id="COG1063">
    <property type="taxonomic scope" value="Bacteria"/>
</dbReference>
<dbReference type="HOGENOM" id="CLU_823603_0_0_9"/>
<dbReference type="OrthoDB" id="1700359at2"/>
<dbReference type="BioCyc" id="MetaCyc:MONOMER-19986"/>
<dbReference type="UniPathway" id="UPA00790"/>
<dbReference type="PRO" id="PR:Q2G1B9"/>
<dbReference type="Proteomes" id="UP000008816">
    <property type="component" value="Chromosome"/>
</dbReference>
<dbReference type="GO" id="GO:0050256">
    <property type="term" value="F:ribitol-5-phosphate 2-dehydrogenase [(NAD(P)+] activity"/>
    <property type="evidence" value="ECO:0007669"/>
    <property type="project" value="UniProtKB-UniRule"/>
</dbReference>
<dbReference type="GO" id="GO:0008270">
    <property type="term" value="F:zinc ion binding"/>
    <property type="evidence" value="ECO:0007669"/>
    <property type="project" value="UniProtKB-UniRule"/>
</dbReference>
<dbReference type="GO" id="GO:0071555">
    <property type="term" value="P:cell wall organization"/>
    <property type="evidence" value="ECO:0007669"/>
    <property type="project" value="UniProtKB-KW"/>
</dbReference>
<dbReference type="GO" id="GO:1902012">
    <property type="term" value="P:poly(ribitol phosphate) teichoic acid biosynthetic process"/>
    <property type="evidence" value="ECO:0007669"/>
    <property type="project" value="UniProtKB-UniRule"/>
</dbReference>
<dbReference type="CDD" id="cd08237">
    <property type="entry name" value="ribitol-5-phosphate_DH"/>
    <property type="match status" value="1"/>
</dbReference>
<dbReference type="Gene3D" id="3.90.180.10">
    <property type="entry name" value="Medium-chain alcohol dehydrogenases, catalytic domain"/>
    <property type="match status" value="1"/>
</dbReference>
<dbReference type="Gene3D" id="3.40.50.720">
    <property type="entry name" value="NAD(P)-binding Rossmann-like Domain"/>
    <property type="match status" value="1"/>
</dbReference>
<dbReference type="HAMAP" id="MF_02069">
    <property type="entry name" value="TarJ"/>
    <property type="match status" value="1"/>
</dbReference>
<dbReference type="InterPro" id="IPR013149">
    <property type="entry name" value="ADH-like_C"/>
</dbReference>
<dbReference type="InterPro" id="IPR013154">
    <property type="entry name" value="ADH-like_N"/>
</dbReference>
<dbReference type="InterPro" id="IPR011032">
    <property type="entry name" value="GroES-like_sf"/>
</dbReference>
<dbReference type="InterPro" id="IPR036291">
    <property type="entry name" value="NAD(P)-bd_dom_sf"/>
</dbReference>
<dbReference type="InterPro" id="IPR034710">
    <property type="entry name" value="TarJ"/>
</dbReference>
<dbReference type="PANTHER" id="PTHR43350:SF19">
    <property type="entry name" value="D-GULOSIDE 3-DEHYDROGENASE"/>
    <property type="match status" value="1"/>
</dbReference>
<dbReference type="PANTHER" id="PTHR43350">
    <property type="entry name" value="NAD-DEPENDENT ALCOHOL DEHYDROGENASE"/>
    <property type="match status" value="1"/>
</dbReference>
<dbReference type="Pfam" id="PF08240">
    <property type="entry name" value="ADH_N"/>
    <property type="match status" value="1"/>
</dbReference>
<dbReference type="Pfam" id="PF00107">
    <property type="entry name" value="ADH_zinc_N"/>
    <property type="match status" value="1"/>
</dbReference>
<dbReference type="SUPFAM" id="SSF50129">
    <property type="entry name" value="GroES-like"/>
    <property type="match status" value="1"/>
</dbReference>
<dbReference type="SUPFAM" id="SSF51735">
    <property type="entry name" value="NAD(P)-binding Rossmann-fold domains"/>
    <property type="match status" value="1"/>
</dbReference>
<comment type="function">
    <text evidence="1 2">Catalyzes the NADPH dependent reduction of D-ribulose 5-phosphate to D-ribitol 5-phosphate.</text>
</comment>
<comment type="catalytic activity">
    <reaction evidence="1 2">
        <text>D-ribitol 5-phosphate + NADP(+) = D-ribulose 5-phosphate + NADPH + H(+)</text>
        <dbReference type="Rhea" id="RHEA:19921"/>
        <dbReference type="ChEBI" id="CHEBI:15378"/>
        <dbReference type="ChEBI" id="CHEBI:57695"/>
        <dbReference type="ChEBI" id="CHEBI:57783"/>
        <dbReference type="ChEBI" id="CHEBI:58121"/>
        <dbReference type="ChEBI" id="CHEBI:58349"/>
        <dbReference type="EC" id="1.1.1.405"/>
    </reaction>
</comment>
<comment type="cofactor">
    <cofactor evidence="1">
        <name>Zn(2+)</name>
        <dbReference type="ChEBI" id="CHEBI:29105"/>
    </cofactor>
</comment>
<comment type="biophysicochemical properties">
    <kinetics>
        <KM evidence="2">6.74 uM for NADPH</KM>
        <KM evidence="2">28.5 uM for D-ribulose 5-phosphate</KM>
    </kinetics>
</comment>
<comment type="pathway">
    <text evidence="1 5">Cell wall biogenesis; poly(ribitol phosphate) teichoic acid biosynthesis.</text>
</comment>
<comment type="subunit">
    <text evidence="2">Heterodimer together with TarI. Can also form a dimer of heterodimers.</text>
</comment>
<comment type="similarity">
    <text evidence="1">Belongs to the zinc-containing alcohol dehydrogenase family.</text>
</comment>
<gene>
    <name evidence="3" type="primary">tarJ</name>
    <name evidence="6" type="ordered locus">SAOUHSC_00226</name>
</gene>
<protein>
    <recommendedName>
        <fullName evidence="1 4">Ribulose-5-phosphate reductase 1</fullName>
        <shortName evidence="1 4">Ribulose-5-P reductase 1</shortName>
        <ecNumber evidence="1 2">1.1.1.405</ecNumber>
    </recommendedName>
    <alternativeName>
        <fullName evidence="1 4">Ribitol-5-phosphate dehydrogenase 1</fullName>
    </alternativeName>
</protein>
<reference key="1">
    <citation type="book" date="2006" name="Gram positive pathogens, 2nd edition">
        <title>The Staphylococcus aureus NCTC 8325 genome.</title>
        <editorList>
            <person name="Fischetti V."/>
            <person name="Novick R."/>
            <person name="Ferretti J."/>
            <person name="Portnoy D."/>
            <person name="Rood J."/>
        </editorList>
        <authorList>
            <person name="Gillaspy A.F."/>
            <person name="Worrell V."/>
            <person name="Orvis J."/>
            <person name="Roe B.A."/>
            <person name="Dyer D.W."/>
            <person name="Iandolo J.J."/>
        </authorList>
    </citation>
    <scope>NUCLEOTIDE SEQUENCE [LARGE SCALE GENOMIC DNA]</scope>
    <source>
        <strain>NCTC 8325 / PS 47</strain>
    </source>
</reference>
<reference key="2">
    <citation type="journal article" date="2004" name="Biochemistry">
        <title>Bifunctional catalysis by CDP-ribitol synthase: convergent recruitment of reductase and cytidylyltransferase activities in Haemophilus influenzae and Staphylococcus aureus.</title>
        <authorList>
            <person name="Pereira M.P."/>
            <person name="Brown E.D."/>
        </authorList>
    </citation>
    <scope>FUNCTION</scope>
    <scope>CATALYTIC ACTIVITY</scope>
    <scope>SUBUNIT</scope>
    <scope>BIOPHYSICOCHEMICAL PROPERTIES</scope>
    <scope>ENZYME KINETICS</scope>
    <scope>PATHWAY</scope>
</reference>
<name>TARJ1_STAA8</name>
<feature type="chain" id="PRO_0000437487" description="Ribulose-5-phosphate reductase 1">
    <location>
        <begin position="1"/>
        <end position="341"/>
    </location>
</feature>
<feature type="binding site" evidence="1">
    <location>
        <position position="38"/>
    </location>
    <ligand>
        <name>Zn(2+)</name>
        <dbReference type="ChEBI" id="CHEBI:29105"/>
        <note>catalytic</note>
    </ligand>
</feature>
<feature type="binding site" evidence="1">
    <location>
        <position position="64"/>
    </location>
    <ligand>
        <name>Zn(2+)</name>
        <dbReference type="ChEBI" id="CHEBI:29105"/>
        <note>catalytic</note>
    </ligand>
</feature>
<feature type="binding site" evidence="1">
    <location>
        <position position="65"/>
    </location>
    <ligand>
        <name>Zn(2+)</name>
        <dbReference type="ChEBI" id="CHEBI:29105"/>
        <note>catalytic</note>
    </ligand>
</feature>
<feature type="binding site" evidence="1">
    <location>
        <position position="144"/>
    </location>
    <ligand>
        <name>Zn(2+)</name>
        <dbReference type="ChEBI" id="CHEBI:29105"/>
        <note>catalytic</note>
    </ligand>
</feature>
<feature type="strand" evidence="7">
    <location>
        <begin position="2"/>
        <end position="10"/>
    </location>
</feature>
<feature type="strand" evidence="7">
    <location>
        <begin position="13"/>
        <end position="20"/>
    </location>
</feature>
<feature type="strand" evidence="7">
    <location>
        <begin position="25"/>
        <end position="36"/>
    </location>
</feature>
<feature type="helix" evidence="7">
    <location>
        <begin position="39"/>
        <end position="46"/>
    </location>
</feature>
<feature type="helix" evidence="7">
    <location>
        <begin position="51"/>
        <end position="54"/>
    </location>
</feature>
<feature type="strand" evidence="7">
    <location>
        <begin position="65"/>
        <end position="73"/>
    </location>
</feature>
<feature type="strand" evidence="7">
    <location>
        <begin position="76"/>
        <end position="78"/>
    </location>
</feature>
<feature type="strand" evidence="7">
    <location>
        <begin position="83"/>
        <end position="86"/>
    </location>
</feature>
<feature type="strand" evidence="7">
    <location>
        <begin position="121"/>
        <end position="123"/>
    </location>
</feature>
<feature type="helix" evidence="7">
    <location>
        <begin position="125"/>
        <end position="127"/>
    </location>
</feature>
<feature type="strand" evidence="7">
    <location>
        <begin position="128"/>
        <end position="130"/>
    </location>
</feature>
<feature type="helix" evidence="7">
    <location>
        <begin position="137"/>
        <end position="140"/>
    </location>
</feature>
<feature type="helix" evidence="7">
    <location>
        <begin position="143"/>
        <end position="155"/>
    </location>
</feature>
<feature type="helix" evidence="7">
    <location>
        <begin position="158"/>
        <end position="160"/>
    </location>
</feature>
<feature type="strand" evidence="7">
    <location>
        <begin position="165"/>
        <end position="170"/>
    </location>
</feature>
<feature type="helix" evidence="7">
    <location>
        <begin position="174"/>
        <end position="186"/>
    </location>
</feature>
<feature type="strand" evidence="7">
    <location>
        <begin position="190"/>
        <end position="197"/>
    </location>
</feature>
<feature type="helix" evidence="7">
    <location>
        <begin position="199"/>
        <end position="202"/>
    </location>
</feature>
<feature type="strand" evidence="7">
    <location>
        <begin position="207"/>
        <end position="213"/>
    </location>
</feature>
<feature type="strand" evidence="7">
    <location>
        <begin position="224"/>
        <end position="228"/>
    </location>
</feature>
<feature type="helix" evidence="7">
    <location>
        <begin position="232"/>
        <end position="245"/>
    </location>
</feature>
<feature type="strand" evidence="7">
    <location>
        <begin position="251"/>
        <end position="254"/>
    </location>
</feature>
<feature type="helix" evidence="7">
    <location>
        <begin position="266"/>
        <end position="272"/>
    </location>
</feature>
<feature type="strand" evidence="7">
    <location>
        <begin position="275"/>
        <end position="278"/>
    </location>
</feature>
<feature type="helix" evidence="7">
    <location>
        <begin position="284"/>
        <end position="296"/>
    </location>
</feature>
<feature type="helix" evidence="7">
    <location>
        <begin position="299"/>
        <end position="305"/>
    </location>
</feature>
<feature type="strand" evidence="7">
    <location>
        <begin position="308"/>
        <end position="314"/>
    </location>
</feature>
<feature type="helix" evidence="7">
    <location>
        <begin position="318"/>
        <end position="328"/>
    </location>
</feature>
<feature type="strand" evidence="7">
    <location>
        <begin position="332"/>
        <end position="339"/>
    </location>
</feature>
<accession>Q2G1B9</accession>